<gene>
    <name type="ordered locus">AF_1548</name>
</gene>
<feature type="chain" id="PRO_0000128019" description="Uncharacterized protein AF_1548">
    <location>
        <begin position="1"/>
        <end position="174"/>
    </location>
</feature>
<feature type="helix" evidence="1">
    <location>
        <begin position="2"/>
        <end position="6"/>
    </location>
</feature>
<feature type="turn" evidence="1">
    <location>
        <begin position="7"/>
        <end position="9"/>
    </location>
</feature>
<feature type="strand" evidence="1">
    <location>
        <begin position="11"/>
        <end position="19"/>
    </location>
</feature>
<feature type="strand" evidence="1">
    <location>
        <begin position="21"/>
        <end position="33"/>
    </location>
</feature>
<feature type="strand" evidence="1">
    <location>
        <begin position="36"/>
        <end position="42"/>
    </location>
</feature>
<feature type="strand" evidence="1">
    <location>
        <begin position="46"/>
        <end position="48"/>
    </location>
</feature>
<feature type="helix" evidence="1">
    <location>
        <begin position="53"/>
        <end position="66"/>
    </location>
</feature>
<feature type="helix" evidence="1">
    <location>
        <begin position="67"/>
        <end position="69"/>
    </location>
</feature>
<feature type="strand" evidence="1">
    <location>
        <begin position="72"/>
        <end position="77"/>
    </location>
</feature>
<feature type="strand" evidence="1">
    <location>
        <begin position="79"/>
        <end position="82"/>
    </location>
</feature>
<feature type="helix" evidence="1">
    <location>
        <begin position="84"/>
        <end position="93"/>
    </location>
</feature>
<feature type="strand" evidence="1">
    <location>
        <begin position="96"/>
        <end position="98"/>
    </location>
</feature>
<feature type="turn" evidence="1">
    <location>
        <begin position="104"/>
        <end position="106"/>
    </location>
</feature>
<feature type="helix" evidence="1">
    <location>
        <begin position="108"/>
        <end position="113"/>
    </location>
</feature>
<feature type="turn" evidence="1">
    <location>
        <begin position="114"/>
        <end position="116"/>
    </location>
</feature>
<feature type="helix" evidence="1">
    <location>
        <begin position="120"/>
        <end position="122"/>
    </location>
</feature>
<feature type="helix" evidence="1">
    <location>
        <begin position="127"/>
        <end position="135"/>
    </location>
</feature>
<feature type="helix" evidence="1">
    <location>
        <begin position="141"/>
        <end position="147"/>
    </location>
</feature>
<feature type="helix" evidence="1">
    <location>
        <begin position="149"/>
        <end position="154"/>
    </location>
</feature>
<feature type="helix" evidence="1">
    <location>
        <begin position="159"/>
        <end position="174"/>
    </location>
</feature>
<keyword id="KW-0002">3D-structure</keyword>
<keyword id="KW-1185">Reference proteome</keyword>
<sequence length="174" mass="19765">MARLLEEHGFETKTNVIVQGNCVEQEIDVVAERDGERYMIECKFHNIPVYTGLKEAMYTYARFLDVEKHGFTQPWIFTNTKFSEEAKKYAGCVGIKLTGWSYPEKEGIEVLLESKGLYPITILRIDKEVLDELVRAGLVFCRDVVSAGEEKLREIGLSAKKAREVIAEAKKVIG</sequence>
<organism>
    <name type="scientific">Archaeoglobus fulgidus (strain ATCC 49558 / DSM 4304 / JCM 9628 / NBRC 100126 / VC-16)</name>
    <dbReference type="NCBI Taxonomy" id="224325"/>
    <lineage>
        <taxon>Archaea</taxon>
        <taxon>Methanobacteriati</taxon>
        <taxon>Methanobacteriota</taxon>
        <taxon>Archaeoglobi</taxon>
        <taxon>Archaeoglobales</taxon>
        <taxon>Archaeoglobaceae</taxon>
        <taxon>Archaeoglobus</taxon>
    </lineage>
</organism>
<reference key="1">
    <citation type="journal article" date="1997" name="Nature">
        <title>The complete genome sequence of the hyperthermophilic, sulphate-reducing archaeon Archaeoglobus fulgidus.</title>
        <authorList>
            <person name="Klenk H.-P."/>
            <person name="Clayton R.A."/>
            <person name="Tomb J.-F."/>
            <person name="White O."/>
            <person name="Nelson K.E."/>
            <person name="Ketchum K.A."/>
            <person name="Dodson R.J."/>
            <person name="Gwinn M.L."/>
            <person name="Hickey E.K."/>
            <person name="Peterson J.D."/>
            <person name="Richardson D.L."/>
            <person name="Kerlavage A.R."/>
            <person name="Graham D.E."/>
            <person name="Kyrpides N.C."/>
            <person name="Fleischmann R.D."/>
            <person name="Quackenbush J."/>
            <person name="Lee N.H."/>
            <person name="Sutton G.G."/>
            <person name="Gill S.R."/>
            <person name="Kirkness E.F."/>
            <person name="Dougherty B.A."/>
            <person name="McKenney K."/>
            <person name="Adams M.D."/>
            <person name="Loftus B.J."/>
            <person name="Peterson S.N."/>
            <person name="Reich C.I."/>
            <person name="McNeil L.K."/>
            <person name="Badger J.H."/>
            <person name="Glodek A."/>
            <person name="Zhou L."/>
            <person name="Overbeek R."/>
            <person name="Gocayne J.D."/>
            <person name="Weidman J.F."/>
            <person name="McDonald L.A."/>
            <person name="Utterback T.R."/>
            <person name="Cotton M.D."/>
            <person name="Spriggs T."/>
            <person name="Artiach P."/>
            <person name="Kaine B.P."/>
            <person name="Sykes S.M."/>
            <person name="Sadow P.W."/>
            <person name="D'Andrea K.P."/>
            <person name="Bowman C."/>
            <person name="Fujii C."/>
            <person name="Garland S.A."/>
            <person name="Mason T.M."/>
            <person name="Olsen G.J."/>
            <person name="Fraser C.M."/>
            <person name="Smith H.O."/>
            <person name="Woese C.R."/>
            <person name="Venter J.C."/>
        </authorList>
    </citation>
    <scope>NUCLEOTIDE SEQUENCE [LARGE SCALE GENOMIC DNA]</scope>
    <source>
        <strain>ATCC 49558 / DSM 4304 / JCM 9628 / NBRC 100126 / VC-16</strain>
    </source>
</reference>
<accession>O28724</accession>
<proteinExistence type="evidence at protein level"/>
<evidence type="ECO:0007829" key="1">
    <source>
        <dbReference type="PDB" id="1Y88"/>
    </source>
</evidence>
<name>Y1548_ARCFU</name>
<dbReference type="EMBL" id="AE000782">
    <property type="protein sequence ID" value="AAB89701.1"/>
    <property type="molecule type" value="Genomic_DNA"/>
</dbReference>
<dbReference type="PIR" id="C69443">
    <property type="entry name" value="C69443"/>
</dbReference>
<dbReference type="PDB" id="1Y88">
    <property type="method" value="X-ray"/>
    <property type="resolution" value="1.85 A"/>
    <property type="chains" value="A=2-174"/>
</dbReference>
<dbReference type="PDBsum" id="1Y88"/>
<dbReference type="SMR" id="O28724"/>
<dbReference type="STRING" id="224325.AF_1548"/>
<dbReference type="PaxDb" id="224325-AF_1548"/>
<dbReference type="DNASU" id="1484776"/>
<dbReference type="EnsemblBacteria" id="AAB89701">
    <property type="protein sequence ID" value="AAB89701"/>
    <property type="gene ID" value="AF_1548"/>
</dbReference>
<dbReference type="KEGG" id="afu:AF_1548"/>
<dbReference type="eggNOG" id="arCOG07526">
    <property type="taxonomic scope" value="Archaea"/>
</dbReference>
<dbReference type="HOGENOM" id="CLU_086368_0_0_2"/>
<dbReference type="OrthoDB" id="106159at2157"/>
<dbReference type="EvolutionaryTrace" id="O28724"/>
<dbReference type="Proteomes" id="UP000002199">
    <property type="component" value="Chromosome"/>
</dbReference>
<dbReference type="GO" id="GO:0003677">
    <property type="term" value="F:DNA binding"/>
    <property type="evidence" value="ECO:0007669"/>
    <property type="project" value="InterPro"/>
</dbReference>
<dbReference type="GO" id="GO:0004519">
    <property type="term" value="F:endonuclease activity"/>
    <property type="evidence" value="ECO:0007669"/>
    <property type="project" value="InterPro"/>
</dbReference>
<dbReference type="GO" id="GO:0000166">
    <property type="term" value="F:nucleotide binding"/>
    <property type="evidence" value="ECO:0007669"/>
    <property type="project" value="InterPro"/>
</dbReference>
<dbReference type="GO" id="GO:0009307">
    <property type="term" value="P:DNA restriction-modification system"/>
    <property type="evidence" value="ECO:0007669"/>
    <property type="project" value="InterPro"/>
</dbReference>
<dbReference type="CDD" id="cd22308">
    <property type="entry name" value="Af1548-like"/>
    <property type="match status" value="1"/>
</dbReference>
<dbReference type="Gene3D" id="3.40.1350.10">
    <property type="match status" value="1"/>
</dbReference>
<dbReference type="Gene3D" id="1.10.150.20">
    <property type="entry name" value="5' to 3' exonuclease, C-terminal subdomain"/>
    <property type="match status" value="1"/>
</dbReference>
<dbReference type="InterPro" id="IPR054374">
    <property type="entry name" value="AF1548-like_C"/>
</dbReference>
<dbReference type="InterPro" id="IPR010995">
    <property type="entry name" value="DNA_repair_Rad51/TF_NusA_a-hlx"/>
</dbReference>
<dbReference type="InterPro" id="IPR011335">
    <property type="entry name" value="Restrct_endonuc-II-like"/>
</dbReference>
<dbReference type="InterPro" id="IPR007560">
    <property type="entry name" value="Restrct_endonuc_IV_Mrr"/>
</dbReference>
<dbReference type="InterPro" id="IPR011856">
    <property type="entry name" value="tRNA_endonuc-like_dom_sf"/>
</dbReference>
<dbReference type="Pfam" id="PF22357">
    <property type="entry name" value="AF1548-like_C"/>
    <property type="match status" value="1"/>
</dbReference>
<dbReference type="Pfam" id="PF04471">
    <property type="entry name" value="Mrr_cat"/>
    <property type="match status" value="1"/>
</dbReference>
<dbReference type="SUPFAM" id="SSF47794">
    <property type="entry name" value="Rad51 N-terminal domain-like"/>
    <property type="match status" value="1"/>
</dbReference>
<dbReference type="SUPFAM" id="SSF52980">
    <property type="entry name" value="Restriction endonuclease-like"/>
    <property type="match status" value="1"/>
</dbReference>
<protein>
    <recommendedName>
        <fullName>Uncharacterized protein AF_1548</fullName>
    </recommendedName>
</protein>